<name>ORF3_HEVMY</name>
<keyword id="KW-1032">Host cell membrane</keyword>
<keyword id="KW-1035">Host cytoplasm</keyword>
<keyword id="KW-1037">Host cytoskeleton</keyword>
<keyword id="KW-1038">Host endoplasmic reticulum</keyword>
<keyword id="KW-1043">Host membrane</keyword>
<keyword id="KW-0945">Host-virus interaction</keyword>
<keyword id="KW-1090">Inhibition of host innate immune response by virus</keyword>
<keyword id="KW-0449">Lipoprotein</keyword>
<keyword id="KW-0472">Membrane</keyword>
<keyword id="KW-0597">Phosphoprotein</keyword>
<keyword id="KW-0899">Viral immunoevasion</keyword>
<keyword id="KW-0946">Virion</keyword>
<evidence type="ECO:0000250" key="1"/>
<evidence type="ECO:0000250" key="2">
    <source>
        <dbReference type="UniProtKB" id="Q68984"/>
    </source>
</evidence>
<evidence type="ECO:0000250" key="3">
    <source>
        <dbReference type="UniProtKB" id="Q81870"/>
    </source>
</evidence>
<evidence type="ECO:0000256" key="4">
    <source>
        <dbReference type="SAM" id="MobiDB-lite"/>
    </source>
</evidence>
<evidence type="ECO:0000305" key="5"/>
<protein>
    <recommendedName>
        <fullName>Protein ORF3</fullName>
        <shortName>pORF3</shortName>
    </recommendedName>
</protein>
<gene>
    <name type="ORF">ORF3</name>
</gene>
<organismHost>
    <name type="scientific">Homo sapiens</name>
    <name type="common">Human</name>
    <dbReference type="NCBI Taxonomy" id="9606"/>
</organismHost>
<organism>
    <name type="scientific">Hepatitis E virus genotype 1 (isolate Human/Myanmar/HEVNE8L)</name>
    <name type="common">HEV-1</name>
    <dbReference type="NCBI Taxonomy" id="31769"/>
    <lineage>
        <taxon>Viruses</taxon>
        <taxon>Riboviria</taxon>
        <taxon>Orthornavirae</taxon>
        <taxon>Kitrinoviricota</taxon>
        <taxon>Alsuviricetes</taxon>
        <taxon>Hepelivirales</taxon>
        <taxon>Hepeviridae</taxon>
        <taxon>Orthohepevirinae</taxon>
        <taxon>Paslahepevirus</taxon>
        <taxon>Hepatitis E virus</taxon>
    </lineage>
</organism>
<proteinExistence type="inferred from homology"/>
<accession>Q04612</accession>
<comment type="function">
    <text evidence="3">Small multifunctional phosphoprotein involved in virion morphogenesis, egress and counteracting host innate immunity. Plays critical roles in the final steps of viral release by interacting with host TSG101, a member of the vacuolar protein-sorting pathway and using other cellular host proteins involved in vesicle formation pathway. Also acts as a viroporin and forms ion conductive pores allowing viral particle release. Impairs the generation of type I interferon by down-regulating host TLR3 and TLR7 as well as their downstream signaling pathways. Down-regulates the phosphorylation of host IRF3 via the interaction with host SIRP-alpha, thereby inhibiting IFN-I expression. Interacts with host microtubules.</text>
</comment>
<comment type="subunit">
    <text evidence="3">Forms homooligomers (By similarity). Interacts with host SRC, HCK, FYN, PIK3R3 and GRB2 (via SH3 domain); binding does not activate the kinases (By similarity). Interacts with host AMBP/bikunin and AMBP/alpha-1-microglobulin peptides (By similarity). Interacts with host HPX/hemopexin. Interacts (when phosphorylated) with capsid protein ORF2 (By similarity). Interacts with host TSG101; this interaction plays a role in viral release from the host cell (By similarity). Interacts with host SIRPA; this interaction down-regulates the phosphorylation of host IRF3 (By similarity).</text>
</comment>
<comment type="subcellular location">
    <subcellularLocation>
        <location evidence="3">Host endoplasmic reticulum membrane</location>
        <topology evidence="3">Lipid-anchor</topology>
    </subcellularLocation>
    <subcellularLocation>
        <location evidence="3">Host cytoplasm</location>
        <location evidence="3">Host cytoskeleton</location>
    </subcellularLocation>
    <subcellularLocation>
        <location evidence="3">Virion</location>
    </subcellularLocation>
    <subcellularLocation>
        <location evidence="3">Host cell membrane</location>
        <topology evidence="3">Lipid-anchor</topology>
    </subcellularLocation>
    <text evidence="3">The N-terminal region seems to associate with the cytoskeleton probably via one of its hydrophobic regions. Present on the surface of the membrane-wrapped virions.</text>
</comment>
<comment type="domain">
    <text evidence="3">The PSAP motif is necessary for the release of membrane-wrapped virions from infected cells.</text>
</comment>
<comment type="PTM">
    <text evidence="3">Palmitoylated in the N-terminus.</text>
</comment>
<comment type="miscellaneous">
    <text evidence="3">The viral particles present in feces and bile are non-enveloped, while those in circulating blood and culture supernatants are covered with a cellular membrane (quasi-enveloped).</text>
</comment>
<comment type="similarity">
    <text evidence="5">Belongs to the hepevirus ORF3 protein family.</text>
</comment>
<comment type="sequence caution" evidence="5">
    <conflict type="erroneous initiation">
        <sequence resource="EMBL-CDS" id="BAA01173"/>
    </conflict>
</comment>
<feature type="chain" id="PRO_0000100139" description="Protein ORF3">
    <location>
        <begin position="1"/>
        <end position="114"/>
    </location>
</feature>
<feature type="region of interest" description="Hydrophobic">
    <location>
        <begin position="6"/>
        <end position="22"/>
    </location>
</feature>
<feature type="region of interest" description="Interaction with host HPX" evidence="1">
    <location>
        <begin position="28"/>
        <end position="68"/>
    </location>
</feature>
<feature type="region of interest" description="Hydrophobic">
    <location>
        <begin position="33"/>
        <end position="53"/>
    </location>
</feature>
<feature type="region of interest" description="Interaction with the capsid protein" evidence="1">
    <location>
        <begin position="48"/>
        <end position="72"/>
    </location>
</feature>
<feature type="region of interest" description="Homodimerization, and interaction with host AMBP/bikunin" evidence="1">
    <location>
        <begin position="72"/>
        <end position="114"/>
    </location>
</feature>
<feature type="region of interest" description="Disordered" evidence="4">
    <location>
        <begin position="91"/>
        <end position="114"/>
    </location>
</feature>
<feature type="region of interest" description="Interaction with host SRC, HCK, FYN, PIK3R3 and GRB2" evidence="1">
    <location>
        <begin position="95"/>
        <end position="104"/>
    </location>
</feature>
<feature type="short sequence motif" description="PTAP/PSAP motif" evidence="3">
    <location>
        <begin position="96"/>
        <end position="99"/>
    </location>
</feature>
<feature type="modified residue" description="Phosphoserine; by host" evidence="2">
    <location>
        <position position="71"/>
    </location>
</feature>
<reference key="1">
    <citation type="journal article" date="1993" name="Virus Genes">
        <title>Sequence and gene structure of the hepatitis E virus isolated from Myanmar.</title>
        <authorList>
            <person name="Aye T.T."/>
            <person name="Uchida T."/>
            <person name="Ma M.Z."/>
            <person name="Iida F."/>
            <person name="Shikata T."/>
            <person name="Ichikawa M."/>
            <person name="Rikihisa T."/>
            <person name="Winn K."/>
        </authorList>
    </citation>
    <scope>NUCLEOTIDE SEQUENCE [GENOMIC RNA]</scope>
</reference>
<dbReference type="EMBL" id="D10330">
    <property type="protein sequence ID" value="BAA01173.1"/>
    <property type="status" value="ALT_INIT"/>
    <property type="molecule type" value="Genomic_RNA"/>
</dbReference>
<dbReference type="IntAct" id="Q04612">
    <property type="interactions" value="1"/>
</dbReference>
<dbReference type="SwissPalm" id="Q04612"/>
<dbReference type="Proteomes" id="UP000007246">
    <property type="component" value="Genome"/>
</dbReference>
<dbReference type="GO" id="GO:0044167">
    <property type="term" value="C:host cell endoplasmic reticulum membrane"/>
    <property type="evidence" value="ECO:0007669"/>
    <property type="project" value="UniProtKB-SubCell"/>
</dbReference>
<dbReference type="GO" id="GO:0020002">
    <property type="term" value="C:host cell plasma membrane"/>
    <property type="evidence" value="ECO:0007669"/>
    <property type="project" value="UniProtKB-SubCell"/>
</dbReference>
<dbReference type="GO" id="GO:0044163">
    <property type="term" value="C:host cytoskeleton"/>
    <property type="evidence" value="ECO:0007669"/>
    <property type="project" value="UniProtKB-SubCell"/>
</dbReference>
<dbReference type="GO" id="GO:0016020">
    <property type="term" value="C:membrane"/>
    <property type="evidence" value="ECO:0007669"/>
    <property type="project" value="UniProtKB-KW"/>
</dbReference>
<dbReference type="GO" id="GO:0044423">
    <property type="term" value="C:virion component"/>
    <property type="evidence" value="ECO:0007669"/>
    <property type="project" value="UniProtKB-KW"/>
</dbReference>
<dbReference type="GO" id="GO:0052170">
    <property type="term" value="P:symbiont-mediated suppression of host innate immune response"/>
    <property type="evidence" value="ECO:0007669"/>
    <property type="project" value="UniProtKB-KW"/>
</dbReference>
<dbReference type="InterPro" id="IPR003384">
    <property type="entry name" value="HEV_Orf2"/>
</dbReference>
<dbReference type="Pfam" id="PF02444">
    <property type="entry name" value="HEV_ORF1"/>
    <property type="match status" value="1"/>
</dbReference>
<sequence length="114" mass="11787">MGSRPCDLGLFCCCSSCFCLCCPRHRPVSRLAAVVGGAAAVPAVVSGVTGLILSPSQSPIFIQPTPSPPMSPLRPGLDLVFANQPDHSAPLGVTRPSAPPLPHVVDLPQLGPRR</sequence>